<proteinExistence type="inferred from homology"/>
<keyword id="KW-0249">Electron transport</keyword>
<keyword id="KW-0472">Membrane</keyword>
<keyword id="KW-0496">Mitochondrion</keyword>
<keyword id="KW-0999">Mitochondrion inner membrane</keyword>
<keyword id="KW-0520">NAD</keyword>
<keyword id="KW-0679">Respiratory chain</keyword>
<keyword id="KW-1278">Translocase</keyword>
<keyword id="KW-0812">Transmembrane</keyword>
<keyword id="KW-1133">Transmembrane helix</keyword>
<keyword id="KW-0813">Transport</keyword>
<keyword id="KW-0830">Ubiquinone</keyword>
<gene>
    <name evidence="1" type="primary">MT-ND2</name>
    <name type="synonym">MTND2</name>
    <name type="synonym">NADH2</name>
    <name type="synonym">ND2</name>
</gene>
<feature type="chain" id="PRO_0000117647" description="NADH-ubiquinone oxidoreductase chain 2">
    <location>
        <begin position="1"/>
        <end position="347"/>
    </location>
</feature>
<feature type="transmembrane region" description="Helical" evidence="3">
    <location>
        <begin position="3"/>
        <end position="23"/>
    </location>
</feature>
<feature type="transmembrane region" description="Helical" evidence="3">
    <location>
        <begin position="25"/>
        <end position="45"/>
    </location>
</feature>
<feature type="transmembrane region" description="Helical" evidence="3">
    <location>
        <begin position="59"/>
        <end position="79"/>
    </location>
</feature>
<feature type="transmembrane region" description="Helical" evidence="3">
    <location>
        <begin position="96"/>
        <end position="116"/>
    </location>
</feature>
<feature type="transmembrane region" description="Helical" evidence="3">
    <location>
        <begin position="122"/>
        <end position="142"/>
    </location>
</feature>
<feature type="transmembrane region" description="Helical" evidence="3">
    <location>
        <begin position="149"/>
        <end position="169"/>
    </location>
</feature>
<feature type="transmembrane region" description="Helical" evidence="3">
    <location>
        <begin position="178"/>
        <end position="198"/>
    </location>
</feature>
<feature type="transmembrane region" description="Helical" evidence="3">
    <location>
        <begin position="201"/>
        <end position="221"/>
    </location>
</feature>
<feature type="transmembrane region" description="Helical" evidence="3">
    <location>
        <begin position="237"/>
        <end position="257"/>
    </location>
</feature>
<feature type="transmembrane region" description="Helical" evidence="3">
    <location>
        <begin position="274"/>
        <end position="294"/>
    </location>
</feature>
<feature type="transmembrane region" description="Helical" evidence="3">
    <location>
        <begin position="323"/>
        <end position="343"/>
    </location>
</feature>
<sequence>MKPPIFIIIMSTVISGTVIVMTSSHWMLTWIGFEMNMLAIIPILMKKFNPRAMEASTKYFLTQATASMLLMMGIIINLLHSGQWTVSNNLNPMASILMTTALAMKLGLAPFHFWVPEVTQGISLSSGMILLTWQKIAPLSILYQISPTINPHLLLPMAILSVLIGGWGGLNQTQLRKIMAYSSIAHMGWMAAILLYNPTMMFLNLIIYITMTLTTFMLFMLNSATTTLSLSQTWNKAPLITSLILTLMLSLGGLPPLSGFTPKWMIIQELTKNEMIILPTFLAITALLNLYFYMRLTYATALTMFPSTNNMKMKWQFESTKKTIFLPPLIIISTMMLPLTPMISILD</sequence>
<name>NU2M_VIVTA</name>
<protein>
    <recommendedName>
        <fullName evidence="1">NADH-ubiquinone oxidoreductase chain 2</fullName>
        <ecNumber evidence="1">7.1.1.2</ecNumber>
    </recommendedName>
    <alternativeName>
        <fullName>NADH dehydrogenase subunit 2</fullName>
    </alternativeName>
</protein>
<comment type="function">
    <text evidence="1">Core subunit of the mitochondrial membrane respiratory chain NADH dehydrogenase (Complex I) which catalyzes electron transfer from NADH through the respiratory chain, using ubiquinone as an electron acceptor. Essential for the catalytic activity and assembly of complex I.</text>
</comment>
<comment type="catalytic activity">
    <reaction evidence="1">
        <text>a ubiquinone + NADH + 5 H(+)(in) = a ubiquinol + NAD(+) + 4 H(+)(out)</text>
        <dbReference type="Rhea" id="RHEA:29091"/>
        <dbReference type="Rhea" id="RHEA-COMP:9565"/>
        <dbReference type="Rhea" id="RHEA-COMP:9566"/>
        <dbReference type="ChEBI" id="CHEBI:15378"/>
        <dbReference type="ChEBI" id="CHEBI:16389"/>
        <dbReference type="ChEBI" id="CHEBI:17976"/>
        <dbReference type="ChEBI" id="CHEBI:57540"/>
        <dbReference type="ChEBI" id="CHEBI:57945"/>
        <dbReference type="EC" id="7.1.1.2"/>
    </reaction>
</comment>
<comment type="subunit">
    <text evidence="1 2">Core subunit of respiratory chain NADH dehydrogenase (Complex I) which is composed of 45 different subunits. Interacts with TMEM242 (By similarity).</text>
</comment>
<comment type="subcellular location">
    <subcellularLocation>
        <location evidence="2">Mitochondrion inner membrane</location>
        <topology evidence="3">Multi-pass membrane protein</topology>
    </subcellularLocation>
</comment>
<comment type="similarity">
    <text evidence="4">Belongs to the complex I subunit 2 family.</text>
</comment>
<organism>
    <name type="scientific">Viverra tangalunga</name>
    <name type="common">Malayan civet</name>
    <dbReference type="NCBI Taxonomy" id="71121"/>
    <lineage>
        <taxon>Eukaryota</taxon>
        <taxon>Metazoa</taxon>
        <taxon>Chordata</taxon>
        <taxon>Craniata</taxon>
        <taxon>Vertebrata</taxon>
        <taxon>Euteleostomi</taxon>
        <taxon>Mammalia</taxon>
        <taxon>Eutheria</taxon>
        <taxon>Laurasiatheria</taxon>
        <taxon>Carnivora</taxon>
        <taxon>Feliformia</taxon>
        <taxon>Viverridae</taxon>
        <taxon>Viverrinae</taxon>
        <taxon>Viverra</taxon>
    </lineage>
</organism>
<reference key="1">
    <citation type="journal article" date="2003" name="Nature">
        <title>Single origin of Malagasy Carnivora from an African ancestor.</title>
        <authorList>
            <person name="Yoder A.D."/>
            <person name="Burns M.M."/>
            <person name="Zehr S."/>
            <person name="Delefosse T."/>
            <person name="Veron G."/>
            <person name="Goodman S.M."/>
            <person name="Flynn J.J."/>
        </authorList>
    </citation>
    <scope>NUCLEOTIDE SEQUENCE [GENOMIC DNA]</scope>
</reference>
<accession>Q85PQ1</accession>
<dbReference type="EC" id="7.1.1.2" evidence="1"/>
<dbReference type="EMBL" id="AY170055">
    <property type="protein sequence ID" value="AAN84589.1"/>
    <property type="molecule type" value="Genomic_DNA"/>
</dbReference>
<dbReference type="SMR" id="Q85PQ1"/>
<dbReference type="GO" id="GO:0005743">
    <property type="term" value="C:mitochondrial inner membrane"/>
    <property type="evidence" value="ECO:0000250"/>
    <property type="project" value="UniProtKB"/>
</dbReference>
<dbReference type="GO" id="GO:0008137">
    <property type="term" value="F:NADH dehydrogenase (ubiquinone) activity"/>
    <property type="evidence" value="ECO:0000250"/>
    <property type="project" value="UniProtKB"/>
</dbReference>
<dbReference type="GO" id="GO:0006120">
    <property type="term" value="P:mitochondrial electron transport, NADH to ubiquinone"/>
    <property type="evidence" value="ECO:0000250"/>
    <property type="project" value="UniProtKB"/>
</dbReference>
<dbReference type="GO" id="GO:0032981">
    <property type="term" value="P:mitochondrial respiratory chain complex I assembly"/>
    <property type="evidence" value="ECO:0000250"/>
    <property type="project" value="UniProtKB"/>
</dbReference>
<dbReference type="InterPro" id="IPR050175">
    <property type="entry name" value="Complex_I_Subunit_2"/>
</dbReference>
<dbReference type="InterPro" id="IPR010933">
    <property type="entry name" value="NADH_DH_su2_C"/>
</dbReference>
<dbReference type="InterPro" id="IPR003917">
    <property type="entry name" value="NADH_UbQ_OxRdtase_chain2"/>
</dbReference>
<dbReference type="InterPro" id="IPR001750">
    <property type="entry name" value="ND/Mrp_TM"/>
</dbReference>
<dbReference type="PANTHER" id="PTHR46552">
    <property type="entry name" value="NADH-UBIQUINONE OXIDOREDUCTASE CHAIN 2"/>
    <property type="match status" value="1"/>
</dbReference>
<dbReference type="PANTHER" id="PTHR46552:SF1">
    <property type="entry name" value="NADH-UBIQUINONE OXIDOREDUCTASE CHAIN 2"/>
    <property type="match status" value="1"/>
</dbReference>
<dbReference type="Pfam" id="PF06444">
    <property type="entry name" value="NADH_dehy_S2_C"/>
    <property type="match status" value="1"/>
</dbReference>
<dbReference type="Pfam" id="PF00361">
    <property type="entry name" value="Proton_antipo_M"/>
    <property type="match status" value="1"/>
</dbReference>
<dbReference type="PRINTS" id="PR01436">
    <property type="entry name" value="NADHDHGNASE2"/>
</dbReference>
<geneLocation type="mitochondrion"/>
<evidence type="ECO:0000250" key="1">
    <source>
        <dbReference type="UniProtKB" id="P03891"/>
    </source>
</evidence>
<evidence type="ECO:0000250" key="2">
    <source>
        <dbReference type="UniProtKB" id="P03892"/>
    </source>
</evidence>
<evidence type="ECO:0000255" key="3"/>
<evidence type="ECO:0000305" key="4"/>